<reference key="1">
    <citation type="journal article" date="2011" name="Stand. Genomic Sci.">
        <title>Complete genome sequence of the filamentous gliding predatory bacterium Herpetosiphon aurantiacus type strain (114-95(T)).</title>
        <authorList>
            <person name="Kiss H."/>
            <person name="Nett M."/>
            <person name="Domin N."/>
            <person name="Martin K."/>
            <person name="Maresca J.A."/>
            <person name="Copeland A."/>
            <person name="Lapidus A."/>
            <person name="Lucas S."/>
            <person name="Berry K.W."/>
            <person name="Glavina Del Rio T."/>
            <person name="Dalin E."/>
            <person name="Tice H."/>
            <person name="Pitluck S."/>
            <person name="Richardson P."/>
            <person name="Bruce D."/>
            <person name="Goodwin L."/>
            <person name="Han C."/>
            <person name="Detter J.C."/>
            <person name="Schmutz J."/>
            <person name="Brettin T."/>
            <person name="Land M."/>
            <person name="Hauser L."/>
            <person name="Kyrpides N.C."/>
            <person name="Ivanova N."/>
            <person name="Goeker M."/>
            <person name="Woyke T."/>
            <person name="Klenk H.P."/>
            <person name="Bryant D.A."/>
        </authorList>
    </citation>
    <scope>NUCLEOTIDE SEQUENCE [LARGE SCALE GENOMIC DNA]</scope>
    <source>
        <strain>ATCC 23779 / DSM 785 / 114-95</strain>
    </source>
</reference>
<proteinExistence type="inferred from homology"/>
<name>RL30_HERA2</name>
<gene>
    <name evidence="1" type="primary">rpmD</name>
    <name type="ordered locus">Haur_4932</name>
</gene>
<keyword id="KW-0687">Ribonucleoprotein</keyword>
<keyword id="KW-0689">Ribosomal protein</keyword>
<sequence>MRITYKKSSIGYSQAQKDTVRSLGLRKLNQVVELPDTPVVRGMIFKIKHLVTVEEVTATEAK</sequence>
<evidence type="ECO:0000255" key="1">
    <source>
        <dbReference type="HAMAP-Rule" id="MF_01371"/>
    </source>
</evidence>
<evidence type="ECO:0000305" key="2"/>
<comment type="subunit">
    <text evidence="1">Part of the 50S ribosomal subunit.</text>
</comment>
<comment type="similarity">
    <text evidence="1">Belongs to the universal ribosomal protein uL30 family.</text>
</comment>
<dbReference type="EMBL" id="CP000875">
    <property type="protein sequence ID" value="ABX07562.1"/>
    <property type="molecule type" value="Genomic_DNA"/>
</dbReference>
<dbReference type="SMR" id="A9B429"/>
<dbReference type="FunCoup" id="A9B429">
    <property type="interactions" value="290"/>
</dbReference>
<dbReference type="STRING" id="316274.Haur_4932"/>
<dbReference type="KEGG" id="hau:Haur_4932"/>
<dbReference type="eggNOG" id="COG1841">
    <property type="taxonomic scope" value="Bacteria"/>
</dbReference>
<dbReference type="HOGENOM" id="CLU_131047_2_0_0"/>
<dbReference type="InParanoid" id="A9B429"/>
<dbReference type="Proteomes" id="UP000000787">
    <property type="component" value="Chromosome"/>
</dbReference>
<dbReference type="GO" id="GO:0022625">
    <property type="term" value="C:cytosolic large ribosomal subunit"/>
    <property type="evidence" value="ECO:0007669"/>
    <property type="project" value="TreeGrafter"/>
</dbReference>
<dbReference type="GO" id="GO:0003735">
    <property type="term" value="F:structural constituent of ribosome"/>
    <property type="evidence" value="ECO:0007669"/>
    <property type="project" value="InterPro"/>
</dbReference>
<dbReference type="GO" id="GO:0006412">
    <property type="term" value="P:translation"/>
    <property type="evidence" value="ECO:0007669"/>
    <property type="project" value="UniProtKB-UniRule"/>
</dbReference>
<dbReference type="CDD" id="cd01658">
    <property type="entry name" value="Ribosomal_L30"/>
    <property type="match status" value="1"/>
</dbReference>
<dbReference type="FunFam" id="3.30.1390.20:FF:000001">
    <property type="entry name" value="50S ribosomal protein L30"/>
    <property type="match status" value="1"/>
</dbReference>
<dbReference type="Gene3D" id="3.30.1390.20">
    <property type="entry name" value="Ribosomal protein L30, ferredoxin-like fold domain"/>
    <property type="match status" value="1"/>
</dbReference>
<dbReference type="HAMAP" id="MF_01371_B">
    <property type="entry name" value="Ribosomal_uL30_B"/>
    <property type="match status" value="1"/>
</dbReference>
<dbReference type="InterPro" id="IPR036919">
    <property type="entry name" value="Ribo_uL30_ferredoxin-like_sf"/>
</dbReference>
<dbReference type="InterPro" id="IPR005996">
    <property type="entry name" value="Ribosomal_uL30_bac-type"/>
</dbReference>
<dbReference type="InterPro" id="IPR018038">
    <property type="entry name" value="Ribosomal_uL30_CS"/>
</dbReference>
<dbReference type="InterPro" id="IPR016082">
    <property type="entry name" value="Ribosomal_uL30_ferredoxin-like"/>
</dbReference>
<dbReference type="NCBIfam" id="TIGR01308">
    <property type="entry name" value="rpmD_bact"/>
    <property type="match status" value="1"/>
</dbReference>
<dbReference type="PANTHER" id="PTHR15892:SF2">
    <property type="entry name" value="LARGE RIBOSOMAL SUBUNIT PROTEIN UL30M"/>
    <property type="match status" value="1"/>
</dbReference>
<dbReference type="PANTHER" id="PTHR15892">
    <property type="entry name" value="MITOCHONDRIAL RIBOSOMAL PROTEIN L30"/>
    <property type="match status" value="1"/>
</dbReference>
<dbReference type="Pfam" id="PF00327">
    <property type="entry name" value="Ribosomal_L30"/>
    <property type="match status" value="1"/>
</dbReference>
<dbReference type="PIRSF" id="PIRSF002211">
    <property type="entry name" value="Ribosomal_L30_bac-type"/>
    <property type="match status" value="1"/>
</dbReference>
<dbReference type="SUPFAM" id="SSF55129">
    <property type="entry name" value="Ribosomal protein L30p/L7e"/>
    <property type="match status" value="1"/>
</dbReference>
<dbReference type="PROSITE" id="PS00634">
    <property type="entry name" value="RIBOSOMAL_L30"/>
    <property type="match status" value="1"/>
</dbReference>
<accession>A9B429</accession>
<organism>
    <name type="scientific">Herpetosiphon aurantiacus (strain ATCC 23779 / DSM 785 / 114-95)</name>
    <dbReference type="NCBI Taxonomy" id="316274"/>
    <lineage>
        <taxon>Bacteria</taxon>
        <taxon>Bacillati</taxon>
        <taxon>Chloroflexota</taxon>
        <taxon>Chloroflexia</taxon>
        <taxon>Herpetosiphonales</taxon>
        <taxon>Herpetosiphonaceae</taxon>
        <taxon>Herpetosiphon</taxon>
    </lineage>
</organism>
<protein>
    <recommendedName>
        <fullName evidence="1">Large ribosomal subunit protein uL30</fullName>
    </recommendedName>
    <alternativeName>
        <fullName evidence="2">50S ribosomal protein L30</fullName>
    </alternativeName>
</protein>
<feature type="chain" id="PRO_0000347104" description="Large ribosomal subunit protein uL30">
    <location>
        <begin position="1"/>
        <end position="62"/>
    </location>
</feature>